<sequence>MEEIGIILPEKDDQVTDAKGLPFAGPQTFDELESEDLYTKYKKLQRMLEFLEVQEEYIKDEQRNLKKEYLHAQEEVKRIQSVPLVIGQFLEAVDQNTGIVGSTTGSNYYVRILSTIDRELLKPSASVALHKHSNALVDVLPPEADSSISMLQADEKPDVQYSDIGGMDTQKQEIREAVELPLTHVELYRQIGIEPPRGVLMYGPPGCGKTMLANAVAHHTTAAFIRVVGSEFVQKYLGEGPRMVRDVFRLAKENSPAIIFIDEIDAIATKRFDAQTGADREVQRILLELLNQMDGFDQTTNVKVIMATNRADTLDPALLRPGRLDRKIEFPLPDRRQKRLIFSTITAKMNLSEEVDLEEFVARPDRVSGADINAICQEAGMNAVRENRYIVLPKDFEKGYKNNIKKDESEYEFYK</sequence>
<protein>
    <recommendedName>
        <fullName>26S proteasome regulatory subunit 6B</fullName>
    </recommendedName>
    <alternativeName>
        <fullName>ATPase MS73</fullName>
    </alternativeName>
</protein>
<evidence type="ECO:0000255" key="1"/>
<evidence type="ECO:0000305" key="2"/>
<feature type="chain" id="PRO_0000084689" description="26S proteasome regulatory subunit 6B">
    <location>
        <begin position="1"/>
        <end position="415"/>
    </location>
</feature>
<feature type="binding site" evidence="1">
    <location>
        <begin position="203"/>
        <end position="210"/>
    </location>
    <ligand>
        <name>ATP</name>
        <dbReference type="ChEBI" id="CHEBI:30616"/>
    </ligand>
</feature>
<comment type="function">
    <text>The 26S proteasome is involved in the ATP-dependent degradation of ubiquitinated proteins. The regulatory (or ATPase) complex confers ATP dependency and substrate specificity to the 26S complex.</text>
</comment>
<comment type="subcellular location">
    <subcellularLocation>
        <location evidence="2">Cytoplasm</location>
    </subcellularLocation>
    <subcellularLocation>
        <location evidence="2">Nucleus</location>
    </subcellularLocation>
</comment>
<comment type="developmental stage">
    <text>Expression of the gene dramatically increases in the pre-eclosion period.</text>
</comment>
<comment type="similarity">
    <text evidence="2">Belongs to the AAA ATPase family.</text>
</comment>
<organism>
    <name type="scientific">Manduca sexta</name>
    <name type="common">Tobacco hawkmoth</name>
    <name type="synonym">Tobacco hornworm</name>
    <dbReference type="NCBI Taxonomy" id="7130"/>
    <lineage>
        <taxon>Eukaryota</taxon>
        <taxon>Metazoa</taxon>
        <taxon>Ecdysozoa</taxon>
        <taxon>Arthropoda</taxon>
        <taxon>Hexapoda</taxon>
        <taxon>Insecta</taxon>
        <taxon>Pterygota</taxon>
        <taxon>Neoptera</taxon>
        <taxon>Endopterygota</taxon>
        <taxon>Lepidoptera</taxon>
        <taxon>Glossata</taxon>
        <taxon>Ditrysia</taxon>
        <taxon>Bombycoidea</taxon>
        <taxon>Sphingidae</taxon>
        <taxon>Sphinginae</taxon>
        <taxon>Sphingini</taxon>
        <taxon>Manduca</taxon>
    </lineage>
</organism>
<keyword id="KW-0067">ATP-binding</keyword>
<keyword id="KW-0963">Cytoplasm</keyword>
<keyword id="KW-0547">Nucleotide-binding</keyword>
<keyword id="KW-0539">Nucleus</keyword>
<keyword id="KW-0647">Proteasome</keyword>
<accession>P46507</accession>
<dbReference type="EMBL" id="Z38135">
    <property type="protein sequence ID" value="CAA86294.1"/>
    <property type="molecule type" value="mRNA"/>
</dbReference>
<dbReference type="SMR" id="P46507"/>
<dbReference type="OrthoDB" id="10255768at2759"/>
<dbReference type="GO" id="GO:0005737">
    <property type="term" value="C:cytoplasm"/>
    <property type="evidence" value="ECO:0007669"/>
    <property type="project" value="UniProtKB-SubCell"/>
</dbReference>
<dbReference type="GO" id="GO:0005634">
    <property type="term" value="C:nucleus"/>
    <property type="evidence" value="ECO:0007669"/>
    <property type="project" value="UniProtKB-SubCell"/>
</dbReference>
<dbReference type="GO" id="GO:0000502">
    <property type="term" value="C:proteasome complex"/>
    <property type="evidence" value="ECO:0007669"/>
    <property type="project" value="UniProtKB-KW"/>
</dbReference>
<dbReference type="GO" id="GO:0005524">
    <property type="term" value="F:ATP binding"/>
    <property type="evidence" value="ECO:0007669"/>
    <property type="project" value="UniProtKB-KW"/>
</dbReference>
<dbReference type="GO" id="GO:0016887">
    <property type="term" value="F:ATP hydrolysis activity"/>
    <property type="evidence" value="ECO:0007669"/>
    <property type="project" value="InterPro"/>
</dbReference>
<dbReference type="CDD" id="cd19502">
    <property type="entry name" value="RecA-like_PAN_like"/>
    <property type="match status" value="1"/>
</dbReference>
<dbReference type="FunFam" id="1.10.8.60:FF:000018">
    <property type="entry name" value="26S protease regulatory subunit 6B"/>
    <property type="match status" value="1"/>
</dbReference>
<dbReference type="FunFam" id="2.40.50.140:FF:000046">
    <property type="entry name" value="26S protease regulatory subunit 6B"/>
    <property type="match status" value="1"/>
</dbReference>
<dbReference type="FunFam" id="3.40.50.300:FF:000033">
    <property type="entry name" value="26S protease regulatory subunit 6B"/>
    <property type="match status" value="1"/>
</dbReference>
<dbReference type="Gene3D" id="1.10.8.60">
    <property type="match status" value="1"/>
</dbReference>
<dbReference type="Gene3D" id="2.40.50.140">
    <property type="entry name" value="Nucleic acid-binding proteins"/>
    <property type="match status" value="1"/>
</dbReference>
<dbReference type="Gene3D" id="3.40.50.300">
    <property type="entry name" value="P-loop containing nucleotide triphosphate hydrolases"/>
    <property type="match status" value="1"/>
</dbReference>
<dbReference type="InterPro" id="IPR050221">
    <property type="entry name" value="26S_Proteasome_ATPase"/>
</dbReference>
<dbReference type="InterPro" id="IPR003593">
    <property type="entry name" value="AAA+_ATPase"/>
</dbReference>
<dbReference type="InterPro" id="IPR041569">
    <property type="entry name" value="AAA_lid_3"/>
</dbReference>
<dbReference type="InterPro" id="IPR003959">
    <property type="entry name" value="ATPase_AAA_core"/>
</dbReference>
<dbReference type="InterPro" id="IPR003960">
    <property type="entry name" value="ATPase_AAA_CS"/>
</dbReference>
<dbReference type="InterPro" id="IPR012340">
    <property type="entry name" value="NA-bd_OB-fold"/>
</dbReference>
<dbReference type="InterPro" id="IPR027417">
    <property type="entry name" value="P-loop_NTPase"/>
</dbReference>
<dbReference type="InterPro" id="IPR032501">
    <property type="entry name" value="Prot_ATP_ID_OB_2nd"/>
</dbReference>
<dbReference type="PANTHER" id="PTHR23073">
    <property type="entry name" value="26S PROTEASOME REGULATORY SUBUNIT"/>
    <property type="match status" value="1"/>
</dbReference>
<dbReference type="Pfam" id="PF00004">
    <property type="entry name" value="AAA"/>
    <property type="match status" value="1"/>
</dbReference>
<dbReference type="Pfam" id="PF17862">
    <property type="entry name" value="AAA_lid_3"/>
    <property type="match status" value="1"/>
</dbReference>
<dbReference type="Pfam" id="PF16450">
    <property type="entry name" value="Prot_ATP_ID_OB_C"/>
    <property type="match status" value="1"/>
</dbReference>
<dbReference type="SMART" id="SM00382">
    <property type="entry name" value="AAA"/>
    <property type="match status" value="1"/>
</dbReference>
<dbReference type="SUPFAM" id="SSF52540">
    <property type="entry name" value="P-loop containing nucleoside triphosphate hydrolases"/>
    <property type="match status" value="1"/>
</dbReference>
<dbReference type="PROSITE" id="PS00674">
    <property type="entry name" value="AAA"/>
    <property type="match status" value="1"/>
</dbReference>
<name>PRS6B_MANSE</name>
<reference key="1">
    <citation type="journal article" date="1995" name="J. Biol. Chem.">
        <title>Developmental changes of the 26 S proteasome in abdominal intersegmental muscles of Manduca sexta during programmed cell death.</title>
        <authorList>
            <person name="Dawson S.P."/>
            <person name="Arnold J.E."/>
            <person name="Mayer N.J."/>
            <person name="Reynolds S.E."/>
            <person name="Billett M.A."/>
            <person name="Gordon C."/>
            <person name="Colleaux L."/>
            <person name="Kloetzel P.-M."/>
            <person name="Tanaka K."/>
            <person name="Mayer R.J."/>
        </authorList>
    </citation>
    <scope>NUCLEOTIDE SEQUENCE [MRNA]</scope>
    <source>
        <tissue>Intersegmental muscle</tissue>
    </source>
</reference>
<proteinExistence type="evidence at transcript level"/>